<feature type="initiator methionine" description="Removed" evidence="3">
    <location>
        <position position="1"/>
    </location>
</feature>
<feature type="chain" id="PRO_0000189340" description="Ferredoxin">
    <location>
        <begin position="2"/>
        <end position="99"/>
    </location>
</feature>
<feature type="domain" description="2Fe-2S ferredoxin-type" evidence="2">
    <location>
        <begin position="4"/>
        <end position="96"/>
    </location>
</feature>
<feature type="binding site" evidence="2">
    <location>
        <position position="42"/>
    </location>
    <ligand>
        <name>[2Fe-2S] cluster</name>
        <dbReference type="ChEBI" id="CHEBI:190135"/>
    </ligand>
</feature>
<feature type="binding site" evidence="2">
    <location>
        <position position="47"/>
    </location>
    <ligand>
        <name>[2Fe-2S] cluster</name>
        <dbReference type="ChEBI" id="CHEBI:190135"/>
    </ligand>
</feature>
<feature type="binding site" evidence="2">
    <location>
        <position position="50"/>
    </location>
    <ligand>
        <name>[2Fe-2S] cluster</name>
        <dbReference type="ChEBI" id="CHEBI:190135"/>
    </ligand>
</feature>
<feature type="binding site" evidence="2">
    <location>
        <position position="80"/>
    </location>
    <ligand>
        <name>[2Fe-2S] cluster</name>
        <dbReference type="ChEBI" id="CHEBI:190135"/>
    </ligand>
</feature>
<feature type="strand" evidence="5">
    <location>
        <begin position="3"/>
        <end position="9"/>
    </location>
</feature>
<feature type="helix" evidence="5">
    <location>
        <begin position="11"/>
        <end position="13"/>
    </location>
</feature>
<feature type="strand" evidence="5">
    <location>
        <begin position="16"/>
        <end position="22"/>
    </location>
</feature>
<feature type="helix" evidence="5">
    <location>
        <begin position="27"/>
        <end position="33"/>
    </location>
</feature>
<feature type="strand" evidence="5">
    <location>
        <begin position="41"/>
        <end position="48"/>
    </location>
</feature>
<feature type="strand" evidence="5">
    <location>
        <begin position="51"/>
        <end position="57"/>
    </location>
</feature>
<feature type="helix" evidence="5">
    <location>
        <begin position="69"/>
        <end position="73"/>
    </location>
</feature>
<feature type="strand" evidence="5">
    <location>
        <begin position="76"/>
        <end position="78"/>
    </location>
</feature>
<feature type="helix" evidence="5">
    <location>
        <begin position="79"/>
        <end position="81"/>
    </location>
</feature>
<feature type="strand" evidence="5">
    <location>
        <begin position="83"/>
        <end position="86"/>
    </location>
</feature>
<feature type="strand" evidence="5">
    <location>
        <begin position="88"/>
        <end position="91"/>
    </location>
</feature>
<feature type="helix" evidence="5">
    <location>
        <begin position="95"/>
        <end position="98"/>
    </location>
</feature>
<keyword id="KW-0001">2Fe-2S</keyword>
<keyword id="KW-0002">3D-structure</keyword>
<keyword id="KW-0903">Direct protein sequencing</keyword>
<keyword id="KW-0249">Electron transport</keyword>
<keyword id="KW-0408">Iron</keyword>
<keyword id="KW-0411">Iron-sulfur</keyword>
<keyword id="KW-0479">Metal-binding</keyword>
<keyword id="KW-0813">Transport</keyword>
<gene>
    <name type="primary">petF</name>
</gene>
<sequence length="99" mass="10748">MATYKVTLINEAEGLNKTIEVPDDQYILDAAEEAGIDLPYSCRAGACSTCAGKLISGTVDQSDQSFLDDDQIEAGYVLTCVAYPTSDCVIETHKEEELY</sequence>
<dbReference type="EMBL" id="AF030002">
    <property type="protein sequence ID" value="AAC04840.1"/>
    <property type="molecule type" value="Genomic_DNA"/>
</dbReference>
<dbReference type="PIR" id="A00252">
    <property type="entry name" value="FEMW"/>
</dbReference>
<dbReference type="PDB" id="1RFK">
    <property type="method" value="X-ray"/>
    <property type="resolution" value="1.25 A"/>
    <property type="chains" value="A/B=2-99"/>
</dbReference>
<dbReference type="PDB" id="3P63">
    <property type="method" value="X-ray"/>
    <property type="resolution" value="2.30 A"/>
    <property type="chains" value="A/B=2-99"/>
</dbReference>
<dbReference type="PDBsum" id="1RFK"/>
<dbReference type="PDBsum" id="3P63"/>
<dbReference type="SMR" id="P00248"/>
<dbReference type="EvolutionaryTrace" id="P00248"/>
<dbReference type="GO" id="GO:0051537">
    <property type="term" value="F:2 iron, 2 sulfur cluster binding"/>
    <property type="evidence" value="ECO:0007669"/>
    <property type="project" value="UniProtKB-KW"/>
</dbReference>
<dbReference type="GO" id="GO:0009055">
    <property type="term" value="F:electron transfer activity"/>
    <property type="evidence" value="ECO:0007669"/>
    <property type="project" value="InterPro"/>
</dbReference>
<dbReference type="GO" id="GO:0046872">
    <property type="term" value="F:metal ion binding"/>
    <property type="evidence" value="ECO:0007669"/>
    <property type="project" value="UniProtKB-KW"/>
</dbReference>
<dbReference type="GO" id="GO:0022900">
    <property type="term" value="P:electron transport chain"/>
    <property type="evidence" value="ECO:0007669"/>
    <property type="project" value="InterPro"/>
</dbReference>
<dbReference type="CDD" id="cd00207">
    <property type="entry name" value="fer2"/>
    <property type="match status" value="1"/>
</dbReference>
<dbReference type="FunFam" id="3.10.20.30:FF:000014">
    <property type="entry name" value="Ferredoxin"/>
    <property type="match status" value="1"/>
</dbReference>
<dbReference type="Gene3D" id="3.10.20.30">
    <property type="match status" value="1"/>
</dbReference>
<dbReference type="InterPro" id="IPR036010">
    <property type="entry name" value="2Fe-2S_ferredoxin-like_sf"/>
</dbReference>
<dbReference type="InterPro" id="IPR001041">
    <property type="entry name" value="2Fe-2S_ferredoxin-type"/>
</dbReference>
<dbReference type="InterPro" id="IPR006058">
    <property type="entry name" value="2Fe2S_fd_BS"/>
</dbReference>
<dbReference type="InterPro" id="IPR012675">
    <property type="entry name" value="Beta-grasp_dom_sf"/>
</dbReference>
<dbReference type="InterPro" id="IPR010241">
    <property type="entry name" value="Fd_pln"/>
</dbReference>
<dbReference type="NCBIfam" id="TIGR02008">
    <property type="entry name" value="fdx_plant"/>
    <property type="match status" value="1"/>
</dbReference>
<dbReference type="PANTHER" id="PTHR43112">
    <property type="entry name" value="FERREDOXIN"/>
    <property type="match status" value="1"/>
</dbReference>
<dbReference type="PANTHER" id="PTHR43112:SF3">
    <property type="entry name" value="FERREDOXIN-2, CHLOROPLASTIC"/>
    <property type="match status" value="1"/>
</dbReference>
<dbReference type="Pfam" id="PF00111">
    <property type="entry name" value="Fer2"/>
    <property type="match status" value="1"/>
</dbReference>
<dbReference type="SUPFAM" id="SSF54292">
    <property type="entry name" value="2Fe-2S ferredoxin-like"/>
    <property type="match status" value="1"/>
</dbReference>
<dbReference type="PROSITE" id="PS00197">
    <property type="entry name" value="2FE2S_FER_1"/>
    <property type="match status" value="1"/>
</dbReference>
<dbReference type="PROSITE" id="PS51085">
    <property type="entry name" value="2FE2S_FER_2"/>
    <property type="match status" value="1"/>
</dbReference>
<proteinExistence type="evidence at protein level"/>
<comment type="function">
    <text>Ferredoxins are iron-sulfur proteins that transfer electrons in a wide variety of metabolic reactions.</text>
</comment>
<comment type="cofactor">
    <cofactor>
        <name>[2Fe-2S] cluster</name>
        <dbReference type="ChEBI" id="CHEBI:190135"/>
    </cofactor>
    <text>Binds 1 [2Fe-2S] cluster.</text>
</comment>
<comment type="subunit">
    <text evidence="1">Forms a complex with heterodimeric ferredoxin-thioredoxin reductase (FTR) and thioredoxin.</text>
</comment>
<comment type="similarity">
    <text evidence="4">Belongs to the 2Fe2S plant-type ferredoxin family.</text>
</comment>
<protein>
    <recommendedName>
        <fullName>Ferredoxin</fullName>
    </recommendedName>
</protein>
<reference key="1">
    <citation type="online journal article" date="1998" name="Plant Gene Register">
        <title>Molecular cloning of the petF gene encoding ferredoxin I of the thermophilic cyanobacterium Mastigocladus laminosus.</title>
        <authorList>
            <person name="He Z.-Y."/>
            <person name="Chitnis P.R."/>
            <person name="Nechushtai R."/>
        </authorList>
        <locator>PGR98-027</locator>
    </citation>
    <scope>NUCLEOTIDE SEQUENCE [GENOMIC DNA]</scope>
    <source>
        <strain>PCC 7605</strain>
    </source>
</reference>
<reference key="2">
    <citation type="submission" date="1978-09" db="PIR data bank">
        <authorList>
            <person name="Hase T."/>
            <person name="Wakabayashi S."/>
            <person name="Matsubara H."/>
            <person name="Rao K.K."/>
            <person name="Hall D.O."/>
            <person name="Widmer H."/>
            <person name="Gysi J."/>
            <person name="Zuber H."/>
        </authorList>
    </citation>
    <scope>PROTEIN SEQUENCE OF 2-99</scope>
    <source>
        <strain>Cohn</strain>
    </source>
</reference>
<evidence type="ECO:0000250" key="1"/>
<evidence type="ECO:0000255" key="2">
    <source>
        <dbReference type="PROSITE-ProRule" id="PRU00465"/>
    </source>
</evidence>
<evidence type="ECO:0000269" key="3">
    <source ref="2"/>
</evidence>
<evidence type="ECO:0000305" key="4"/>
<evidence type="ECO:0007829" key="5">
    <source>
        <dbReference type="PDB" id="1RFK"/>
    </source>
</evidence>
<accession>P00248</accession>
<accession>O31125</accession>
<name>FER_MASLA</name>
<organism>
    <name type="scientific">Mastigocladus laminosus</name>
    <name type="common">Fischerella sp.</name>
    <dbReference type="NCBI Taxonomy" id="83541"/>
    <lineage>
        <taxon>Bacteria</taxon>
        <taxon>Bacillati</taxon>
        <taxon>Cyanobacteriota</taxon>
        <taxon>Cyanophyceae</taxon>
        <taxon>Nostocales</taxon>
        <taxon>Hapalosiphonaceae</taxon>
        <taxon>Mastigocladus</taxon>
    </lineage>
</organism>